<protein>
    <recommendedName>
        <fullName evidence="1">Succinyl-diaminopimelate desuccinylase</fullName>
        <shortName evidence="1">SDAP desuccinylase</shortName>
        <ecNumber evidence="1">3.5.1.18</ecNumber>
    </recommendedName>
    <alternativeName>
        <fullName evidence="1">N-succinyl-LL-2,6-diaminoheptanedioate amidohydrolase</fullName>
    </alternativeName>
</protein>
<proteinExistence type="inferred from homology"/>
<gene>
    <name evidence="1" type="primary">dapE</name>
    <name type="ordered locus">SeD_A2849</name>
</gene>
<name>DAPE_SALDC</name>
<comment type="function">
    <text evidence="1">Catalyzes the hydrolysis of N-succinyl-L,L-diaminopimelic acid (SDAP), forming succinate and LL-2,6-diaminopimelate (DAP), an intermediate involved in the bacterial biosynthesis of lysine and meso-diaminopimelic acid, an essential component of bacterial cell walls.</text>
</comment>
<comment type="catalytic activity">
    <reaction evidence="1">
        <text>N-succinyl-(2S,6S)-2,6-diaminopimelate + H2O = (2S,6S)-2,6-diaminopimelate + succinate</text>
        <dbReference type="Rhea" id="RHEA:22608"/>
        <dbReference type="ChEBI" id="CHEBI:15377"/>
        <dbReference type="ChEBI" id="CHEBI:30031"/>
        <dbReference type="ChEBI" id="CHEBI:57609"/>
        <dbReference type="ChEBI" id="CHEBI:58087"/>
        <dbReference type="EC" id="3.5.1.18"/>
    </reaction>
</comment>
<comment type="cofactor">
    <cofactor evidence="1">
        <name>Zn(2+)</name>
        <dbReference type="ChEBI" id="CHEBI:29105"/>
    </cofactor>
    <cofactor evidence="1">
        <name>Co(2+)</name>
        <dbReference type="ChEBI" id="CHEBI:48828"/>
    </cofactor>
    <text evidence="1">Binds 2 Zn(2+) or Co(2+) ions per subunit.</text>
</comment>
<comment type="pathway">
    <text evidence="1">Amino-acid biosynthesis; L-lysine biosynthesis via DAP pathway; LL-2,6-diaminopimelate from (S)-tetrahydrodipicolinate (succinylase route): step 3/3.</text>
</comment>
<comment type="subunit">
    <text evidence="1">Homodimer.</text>
</comment>
<comment type="similarity">
    <text evidence="1">Belongs to the peptidase M20A family. DapE subfamily.</text>
</comment>
<evidence type="ECO:0000255" key="1">
    <source>
        <dbReference type="HAMAP-Rule" id="MF_01690"/>
    </source>
</evidence>
<sequence>MSCPVIELTQQLIRRPSLSPDDAGCQALMIERLRKIGFTIEHMDFGDTQNFWAWRGRGETLAFAGHTDVVPAGDVDRWINPPFEPTIRDGMLFGRGAADMKGSLAAMVVAAERFVAQHPHHRGRLAFLITSDEEASAKNGTVKVVEALMARNERLDYCLVGEPSSTEIVGDVVKNGRRGSLTCNLTIHGVQGHVAYPHLADNPVHRAAPFLNELVAIEWDRGNDFFPATSMQVANIQAGTGSNNVIPGELFVQFNFRFSTELTDEMIKERVHALLEKHQLRYTVDWWLSGQPFLTARGKLVDAVVNAIEHYNEIKPQLLTTGGTSDGRFIARMGAQVVELGPVNATIHKINECVNAADLQLLARMYQRIMEQLVA</sequence>
<organism>
    <name type="scientific">Salmonella dublin (strain CT_02021853)</name>
    <dbReference type="NCBI Taxonomy" id="439851"/>
    <lineage>
        <taxon>Bacteria</taxon>
        <taxon>Pseudomonadati</taxon>
        <taxon>Pseudomonadota</taxon>
        <taxon>Gammaproteobacteria</taxon>
        <taxon>Enterobacterales</taxon>
        <taxon>Enterobacteriaceae</taxon>
        <taxon>Salmonella</taxon>
    </lineage>
</organism>
<feature type="chain" id="PRO_0000375713" description="Succinyl-diaminopimelate desuccinylase">
    <location>
        <begin position="1"/>
        <end position="375"/>
    </location>
</feature>
<feature type="active site" evidence="1">
    <location>
        <position position="68"/>
    </location>
</feature>
<feature type="active site" description="Proton acceptor" evidence="1">
    <location>
        <position position="133"/>
    </location>
</feature>
<feature type="binding site" evidence="1">
    <location>
        <position position="66"/>
    </location>
    <ligand>
        <name>Zn(2+)</name>
        <dbReference type="ChEBI" id="CHEBI:29105"/>
        <label>1</label>
    </ligand>
</feature>
<feature type="binding site" evidence="1">
    <location>
        <position position="99"/>
    </location>
    <ligand>
        <name>Zn(2+)</name>
        <dbReference type="ChEBI" id="CHEBI:29105"/>
        <label>1</label>
    </ligand>
</feature>
<feature type="binding site" evidence="1">
    <location>
        <position position="99"/>
    </location>
    <ligand>
        <name>Zn(2+)</name>
        <dbReference type="ChEBI" id="CHEBI:29105"/>
        <label>2</label>
    </ligand>
</feature>
<feature type="binding site" evidence="1">
    <location>
        <position position="134"/>
    </location>
    <ligand>
        <name>Zn(2+)</name>
        <dbReference type="ChEBI" id="CHEBI:29105"/>
        <label>2</label>
    </ligand>
</feature>
<feature type="binding site" evidence="1">
    <location>
        <position position="162"/>
    </location>
    <ligand>
        <name>Zn(2+)</name>
        <dbReference type="ChEBI" id="CHEBI:29105"/>
        <label>1</label>
    </ligand>
</feature>
<feature type="binding site" evidence="1">
    <location>
        <position position="348"/>
    </location>
    <ligand>
        <name>Zn(2+)</name>
        <dbReference type="ChEBI" id="CHEBI:29105"/>
        <label>2</label>
    </ligand>
</feature>
<dbReference type="EC" id="3.5.1.18" evidence="1"/>
<dbReference type="EMBL" id="CP001144">
    <property type="protein sequence ID" value="ACH77550.1"/>
    <property type="molecule type" value="Genomic_DNA"/>
</dbReference>
<dbReference type="RefSeq" id="WP_001277825.1">
    <property type="nucleotide sequence ID" value="NC_011205.1"/>
</dbReference>
<dbReference type="SMR" id="B5FQH3"/>
<dbReference type="MEROPS" id="M20.010"/>
<dbReference type="KEGG" id="sed:SeD_A2849"/>
<dbReference type="HOGENOM" id="CLU_021802_4_0_6"/>
<dbReference type="UniPathway" id="UPA00034">
    <property type="reaction ID" value="UER00021"/>
</dbReference>
<dbReference type="Proteomes" id="UP000008322">
    <property type="component" value="Chromosome"/>
</dbReference>
<dbReference type="GO" id="GO:0008777">
    <property type="term" value="F:acetylornithine deacetylase activity"/>
    <property type="evidence" value="ECO:0007669"/>
    <property type="project" value="TreeGrafter"/>
</dbReference>
<dbReference type="GO" id="GO:0050897">
    <property type="term" value="F:cobalt ion binding"/>
    <property type="evidence" value="ECO:0007669"/>
    <property type="project" value="UniProtKB-UniRule"/>
</dbReference>
<dbReference type="GO" id="GO:0009014">
    <property type="term" value="F:succinyl-diaminopimelate desuccinylase activity"/>
    <property type="evidence" value="ECO:0007669"/>
    <property type="project" value="UniProtKB-UniRule"/>
</dbReference>
<dbReference type="GO" id="GO:0008270">
    <property type="term" value="F:zinc ion binding"/>
    <property type="evidence" value="ECO:0007669"/>
    <property type="project" value="UniProtKB-UniRule"/>
</dbReference>
<dbReference type="GO" id="GO:0019877">
    <property type="term" value="P:diaminopimelate biosynthetic process"/>
    <property type="evidence" value="ECO:0007669"/>
    <property type="project" value="UniProtKB-UniRule"/>
</dbReference>
<dbReference type="GO" id="GO:0006526">
    <property type="term" value="P:L-arginine biosynthetic process"/>
    <property type="evidence" value="ECO:0007669"/>
    <property type="project" value="TreeGrafter"/>
</dbReference>
<dbReference type="GO" id="GO:0009089">
    <property type="term" value="P:lysine biosynthetic process via diaminopimelate"/>
    <property type="evidence" value="ECO:0007669"/>
    <property type="project" value="UniProtKB-UniRule"/>
</dbReference>
<dbReference type="CDD" id="cd03891">
    <property type="entry name" value="M20_DapE_proteobac"/>
    <property type="match status" value="1"/>
</dbReference>
<dbReference type="FunFam" id="3.30.70.360:FF:000011">
    <property type="entry name" value="Succinyl-diaminopimelate desuccinylase"/>
    <property type="match status" value="1"/>
</dbReference>
<dbReference type="FunFam" id="3.40.630.10:FF:000005">
    <property type="entry name" value="Succinyl-diaminopimelate desuccinylase"/>
    <property type="match status" value="1"/>
</dbReference>
<dbReference type="FunFam" id="3.40.630.10:FF:000010">
    <property type="entry name" value="Succinyl-diaminopimelate desuccinylase"/>
    <property type="match status" value="1"/>
</dbReference>
<dbReference type="Gene3D" id="3.40.630.10">
    <property type="entry name" value="Zn peptidases"/>
    <property type="match status" value="2"/>
</dbReference>
<dbReference type="HAMAP" id="MF_01690">
    <property type="entry name" value="DapE"/>
    <property type="match status" value="1"/>
</dbReference>
<dbReference type="InterPro" id="IPR001261">
    <property type="entry name" value="ArgE/DapE_CS"/>
</dbReference>
<dbReference type="InterPro" id="IPR036264">
    <property type="entry name" value="Bact_exopeptidase_dim_dom"/>
</dbReference>
<dbReference type="InterPro" id="IPR005941">
    <property type="entry name" value="DapE_proteobac"/>
</dbReference>
<dbReference type="InterPro" id="IPR002933">
    <property type="entry name" value="Peptidase_M20"/>
</dbReference>
<dbReference type="InterPro" id="IPR011650">
    <property type="entry name" value="Peptidase_M20_dimer"/>
</dbReference>
<dbReference type="InterPro" id="IPR050072">
    <property type="entry name" value="Peptidase_M20A"/>
</dbReference>
<dbReference type="NCBIfam" id="TIGR01246">
    <property type="entry name" value="dapE_proteo"/>
    <property type="match status" value="1"/>
</dbReference>
<dbReference type="NCBIfam" id="NF009557">
    <property type="entry name" value="PRK13009.1"/>
    <property type="match status" value="1"/>
</dbReference>
<dbReference type="PANTHER" id="PTHR43808">
    <property type="entry name" value="ACETYLORNITHINE DEACETYLASE"/>
    <property type="match status" value="1"/>
</dbReference>
<dbReference type="PANTHER" id="PTHR43808:SF31">
    <property type="entry name" value="N-ACETYL-L-CITRULLINE DEACETYLASE"/>
    <property type="match status" value="1"/>
</dbReference>
<dbReference type="Pfam" id="PF07687">
    <property type="entry name" value="M20_dimer"/>
    <property type="match status" value="1"/>
</dbReference>
<dbReference type="Pfam" id="PF01546">
    <property type="entry name" value="Peptidase_M20"/>
    <property type="match status" value="1"/>
</dbReference>
<dbReference type="SUPFAM" id="SSF55031">
    <property type="entry name" value="Bacterial exopeptidase dimerisation domain"/>
    <property type="match status" value="1"/>
</dbReference>
<dbReference type="SUPFAM" id="SSF53187">
    <property type="entry name" value="Zn-dependent exopeptidases"/>
    <property type="match status" value="1"/>
</dbReference>
<dbReference type="PROSITE" id="PS00758">
    <property type="entry name" value="ARGE_DAPE_CPG2_1"/>
    <property type="match status" value="1"/>
</dbReference>
<dbReference type="PROSITE" id="PS00759">
    <property type="entry name" value="ARGE_DAPE_CPG2_2"/>
    <property type="match status" value="1"/>
</dbReference>
<keyword id="KW-0028">Amino-acid biosynthesis</keyword>
<keyword id="KW-0170">Cobalt</keyword>
<keyword id="KW-0220">Diaminopimelate biosynthesis</keyword>
<keyword id="KW-0378">Hydrolase</keyword>
<keyword id="KW-0457">Lysine biosynthesis</keyword>
<keyword id="KW-0479">Metal-binding</keyword>
<keyword id="KW-0862">Zinc</keyword>
<accession>B5FQH3</accession>
<reference key="1">
    <citation type="journal article" date="2011" name="J. Bacteriol.">
        <title>Comparative genomics of 28 Salmonella enterica isolates: evidence for CRISPR-mediated adaptive sublineage evolution.</title>
        <authorList>
            <person name="Fricke W.F."/>
            <person name="Mammel M.K."/>
            <person name="McDermott P.F."/>
            <person name="Tartera C."/>
            <person name="White D.G."/>
            <person name="Leclerc J.E."/>
            <person name="Ravel J."/>
            <person name="Cebula T.A."/>
        </authorList>
    </citation>
    <scope>NUCLEOTIDE SEQUENCE [LARGE SCALE GENOMIC DNA]</scope>
    <source>
        <strain>CT_02021853</strain>
    </source>
</reference>